<name>NPD_DESOH</name>
<evidence type="ECO:0000250" key="1"/>
<evidence type="ECO:0000255" key="2">
    <source>
        <dbReference type="PROSITE-ProRule" id="PRU00236"/>
    </source>
</evidence>
<evidence type="ECO:0000305" key="3"/>
<accession>A9A0B2</accession>
<feature type="chain" id="PRO_1000137252" description="NAD-dependent protein deacylase">
    <location>
        <begin position="1"/>
        <end position="273"/>
    </location>
</feature>
<feature type="domain" description="Deacetylase sirtuin-type" evidence="2">
    <location>
        <begin position="1"/>
        <end position="269"/>
    </location>
</feature>
<feature type="active site" description="Proton acceptor" evidence="2">
    <location>
        <position position="125"/>
    </location>
</feature>
<feature type="binding site" evidence="1">
    <location>
        <begin position="25"/>
        <end position="44"/>
    </location>
    <ligand>
        <name>NAD(+)</name>
        <dbReference type="ChEBI" id="CHEBI:57540"/>
    </ligand>
</feature>
<feature type="binding site" evidence="1">
    <location>
        <begin position="107"/>
        <end position="110"/>
    </location>
    <ligand>
        <name>NAD(+)</name>
        <dbReference type="ChEBI" id="CHEBI:57540"/>
    </ligand>
</feature>
<feature type="binding site" evidence="2">
    <location>
        <position position="133"/>
    </location>
    <ligand>
        <name>Zn(2+)</name>
        <dbReference type="ChEBI" id="CHEBI:29105"/>
    </ligand>
</feature>
<feature type="binding site" evidence="2">
    <location>
        <position position="136"/>
    </location>
    <ligand>
        <name>Zn(2+)</name>
        <dbReference type="ChEBI" id="CHEBI:29105"/>
    </ligand>
</feature>
<feature type="binding site" evidence="2">
    <location>
        <position position="173"/>
    </location>
    <ligand>
        <name>Zn(2+)</name>
        <dbReference type="ChEBI" id="CHEBI:29105"/>
    </ligand>
</feature>
<feature type="binding site" evidence="2">
    <location>
        <position position="176"/>
    </location>
    <ligand>
        <name>Zn(2+)</name>
        <dbReference type="ChEBI" id="CHEBI:29105"/>
    </ligand>
</feature>
<feature type="binding site" evidence="1">
    <location>
        <begin position="211"/>
        <end position="213"/>
    </location>
    <ligand>
        <name>NAD(+)</name>
        <dbReference type="ChEBI" id="CHEBI:57540"/>
    </ligand>
</feature>
<feature type="binding site" evidence="1">
    <location>
        <begin position="237"/>
        <end position="239"/>
    </location>
    <ligand>
        <name>NAD(+)</name>
        <dbReference type="ChEBI" id="CHEBI:57540"/>
    </ligand>
</feature>
<feature type="binding site" evidence="1">
    <location>
        <position position="255"/>
    </location>
    <ligand>
        <name>NAD(+)</name>
        <dbReference type="ChEBI" id="CHEBI:57540"/>
    </ligand>
</feature>
<organism>
    <name type="scientific">Desulfosudis oleivorans (strain DSM 6200 / JCM 39069 / Hxd3)</name>
    <name type="common">Desulfococcus oleovorans</name>
    <dbReference type="NCBI Taxonomy" id="96561"/>
    <lineage>
        <taxon>Bacteria</taxon>
        <taxon>Pseudomonadati</taxon>
        <taxon>Thermodesulfobacteriota</taxon>
        <taxon>Desulfobacteria</taxon>
        <taxon>Desulfobacterales</taxon>
        <taxon>Desulfosudaceae</taxon>
        <taxon>Desulfosudis</taxon>
    </lineage>
</organism>
<sequence>MNLDNAIHEAAKVLAGASRAAVFSGAGVSAESGIPTFRDPGGVWDRLNPAEVGDTQGLLASLEKNPEKLVAMFMELLAVFDAAIPNPGHRALFDLERMGILQAVITQNIDNLHQEAGNTQVIEMHGNGFRFRCLKCRSRRSHERHALIGRVKERLSTLPDFSPASIFAAMPDCDLCGSGMRPDVVMFGETVMEVENAFAAARSCDVMLALGTSGVVTPAAQIPAEAKASGAKVIVINPNENGFARVCDIYISMKTGQALPRIVEQVKKIRSGS</sequence>
<keyword id="KW-0963">Cytoplasm</keyword>
<keyword id="KW-0479">Metal-binding</keyword>
<keyword id="KW-0520">NAD</keyword>
<keyword id="KW-1185">Reference proteome</keyword>
<keyword id="KW-0808">Transferase</keyword>
<keyword id="KW-0862">Zinc</keyword>
<dbReference type="EC" id="2.3.1.286" evidence="2"/>
<dbReference type="EMBL" id="CP000859">
    <property type="protein sequence ID" value="ABW69031.1"/>
    <property type="molecule type" value="Genomic_DNA"/>
</dbReference>
<dbReference type="RefSeq" id="WP_012176641.1">
    <property type="nucleotide sequence ID" value="NC_009943.1"/>
</dbReference>
<dbReference type="SMR" id="A9A0B2"/>
<dbReference type="STRING" id="96561.Dole_3228"/>
<dbReference type="KEGG" id="dol:Dole_3228"/>
<dbReference type="eggNOG" id="COG0846">
    <property type="taxonomic scope" value="Bacteria"/>
</dbReference>
<dbReference type="HOGENOM" id="CLU_023643_3_1_7"/>
<dbReference type="OrthoDB" id="9800582at2"/>
<dbReference type="Proteomes" id="UP000008561">
    <property type="component" value="Chromosome"/>
</dbReference>
<dbReference type="GO" id="GO:0005737">
    <property type="term" value="C:cytoplasm"/>
    <property type="evidence" value="ECO:0007669"/>
    <property type="project" value="UniProtKB-SubCell"/>
</dbReference>
<dbReference type="GO" id="GO:0017136">
    <property type="term" value="F:histone deacetylase activity, NAD-dependent"/>
    <property type="evidence" value="ECO:0007669"/>
    <property type="project" value="TreeGrafter"/>
</dbReference>
<dbReference type="GO" id="GO:0046872">
    <property type="term" value="F:metal ion binding"/>
    <property type="evidence" value="ECO:0007669"/>
    <property type="project" value="UniProtKB-KW"/>
</dbReference>
<dbReference type="GO" id="GO:0070403">
    <property type="term" value="F:NAD+ binding"/>
    <property type="evidence" value="ECO:0007669"/>
    <property type="project" value="InterPro"/>
</dbReference>
<dbReference type="CDD" id="cd01407">
    <property type="entry name" value="SIR2-fam"/>
    <property type="match status" value="1"/>
</dbReference>
<dbReference type="Gene3D" id="3.30.1600.10">
    <property type="entry name" value="SIR2/SIRT2 'Small Domain"/>
    <property type="match status" value="1"/>
</dbReference>
<dbReference type="Gene3D" id="3.40.50.1220">
    <property type="entry name" value="TPP-binding domain"/>
    <property type="match status" value="1"/>
</dbReference>
<dbReference type="InterPro" id="IPR029035">
    <property type="entry name" value="DHS-like_NAD/FAD-binding_dom"/>
</dbReference>
<dbReference type="InterPro" id="IPR050134">
    <property type="entry name" value="NAD-dep_sirtuin_deacylases"/>
</dbReference>
<dbReference type="InterPro" id="IPR003000">
    <property type="entry name" value="Sirtuin"/>
</dbReference>
<dbReference type="InterPro" id="IPR026591">
    <property type="entry name" value="Sirtuin_cat_small_dom_sf"/>
</dbReference>
<dbReference type="InterPro" id="IPR026590">
    <property type="entry name" value="Ssirtuin_cat_dom"/>
</dbReference>
<dbReference type="NCBIfam" id="NF001753">
    <property type="entry name" value="PRK00481.1-3"/>
    <property type="match status" value="1"/>
</dbReference>
<dbReference type="PANTHER" id="PTHR11085">
    <property type="entry name" value="NAD-DEPENDENT PROTEIN DEACYLASE SIRTUIN-5, MITOCHONDRIAL-RELATED"/>
    <property type="match status" value="1"/>
</dbReference>
<dbReference type="PANTHER" id="PTHR11085:SF10">
    <property type="entry name" value="NAD-DEPENDENT PROTEIN DEACYLASE SIRTUIN-5, MITOCHONDRIAL-RELATED"/>
    <property type="match status" value="1"/>
</dbReference>
<dbReference type="Pfam" id="PF02146">
    <property type="entry name" value="SIR2"/>
    <property type="match status" value="1"/>
</dbReference>
<dbReference type="SUPFAM" id="SSF52467">
    <property type="entry name" value="DHS-like NAD/FAD-binding domain"/>
    <property type="match status" value="1"/>
</dbReference>
<dbReference type="PROSITE" id="PS50305">
    <property type="entry name" value="SIRTUIN"/>
    <property type="match status" value="1"/>
</dbReference>
<comment type="function">
    <text evidence="1">NAD-dependent protein deacetylase which modulates the activities of several proteins which are inactive in their acetylated form.</text>
</comment>
<comment type="catalytic activity">
    <reaction evidence="2">
        <text>N(6)-acetyl-L-lysyl-[protein] + NAD(+) + H2O = 2''-O-acetyl-ADP-D-ribose + nicotinamide + L-lysyl-[protein]</text>
        <dbReference type="Rhea" id="RHEA:43636"/>
        <dbReference type="Rhea" id="RHEA-COMP:9752"/>
        <dbReference type="Rhea" id="RHEA-COMP:10731"/>
        <dbReference type="ChEBI" id="CHEBI:15377"/>
        <dbReference type="ChEBI" id="CHEBI:17154"/>
        <dbReference type="ChEBI" id="CHEBI:29969"/>
        <dbReference type="ChEBI" id="CHEBI:57540"/>
        <dbReference type="ChEBI" id="CHEBI:61930"/>
        <dbReference type="ChEBI" id="CHEBI:83767"/>
        <dbReference type="EC" id="2.3.1.286"/>
    </reaction>
</comment>
<comment type="cofactor">
    <cofactor evidence="1">
        <name>Zn(2+)</name>
        <dbReference type="ChEBI" id="CHEBI:29105"/>
    </cofactor>
    <text evidence="1">Binds 1 zinc ion per subunit.</text>
</comment>
<comment type="subcellular location">
    <subcellularLocation>
        <location evidence="1">Cytoplasm</location>
    </subcellularLocation>
</comment>
<comment type="similarity">
    <text evidence="3">Belongs to the sirtuin family. Class III subfamily.</text>
</comment>
<protein>
    <recommendedName>
        <fullName>NAD-dependent protein deacylase</fullName>
        <ecNumber evidence="2">2.3.1.286</ecNumber>
    </recommendedName>
    <alternativeName>
        <fullName>Regulatory protein SIR2 homolog</fullName>
    </alternativeName>
</protein>
<reference key="1">
    <citation type="submission" date="2007-10" db="EMBL/GenBank/DDBJ databases">
        <title>Complete sequence of Desulfococcus oleovorans Hxd3.</title>
        <authorList>
            <consortium name="US DOE Joint Genome Institute"/>
            <person name="Copeland A."/>
            <person name="Lucas S."/>
            <person name="Lapidus A."/>
            <person name="Barry K."/>
            <person name="Glavina del Rio T."/>
            <person name="Dalin E."/>
            <person name="Tice H."/>
            <person name="Pitluck S."/>
            <person name="Kiss H."/>
            <person name="Brettin T."/>
            <person name="Bruce D."/>
            <person name="Detter J.C."/>
            <person name="Han C."/>
            <person name="Schmutz J."/>
            <person name="Larimer F."/>
            <person name="Land M."/>
            <person name="Hauser L."/>
            <person name="Kyrpides N."/>
            <person name="Kim E."/>
            <person name="Wawrik B."/>
            <person name="Richardson P."/>
        </authorList>
    </citation>
    <scope>NUCLEOTIDE SEQUENCE [LARGE SCALE GENOMIC DNA]</scope>
    <source>
        <strain>DSM 6200 / JCM 39069 / Hxd3</strain>
    </source>
</reference>
<proteinExistence type="inferred from homology"/>
<gene>
    <name type="primary">cobB</name>
    <name type="ordered locus">Dole_3228</name>
</gene>